<evidence type="ECO:0000255" key="1"/>
<evidence type="ECO:0000255" key="2">
    <source>
        <dbReference type="PROSITE-ProRule" id="PRU00273"/>
    </source>
</evidence>
<evidence type="ECO:0000256" key="3">
    <source>
        <dbReference type="SAM" id="MobiDB-lite"/>
    </source>
</evidence>
<evidence type="ECO:0000305" key="4"/>
<comment type="PTM">
    <text evidence="4">This protein undergoes a protein self splicing that involves a post-translational excision of the intervening region (intein) followed by peptide ligation.</text>
</comment>
<comment type="similarity">
    <text evidence="4">Belongs to the iron-sulfur cluster assembly SufBD family.</text>
</comment>
<keyword id="KW-0068">Autocatalytic cleavage</keyword>
<keyword id="KW-0255">Endonuclease</keyword>
<keyword id="KW-0378">Hydrolase</keyword>
<keyword id="KW-0404">Intron homing</keyword>
<keyword id="KW-0540">Nuclease</keyword>
<keyword id="KW-0651">Protein splicing</keyword>
<keyword id="KW-1185">Reference proteome</keyword>
<gene>
    <name type="ordered locus">BQ2027_MB1496</name>
</gene>
<feature type="chain" id="PRO_0000036193" description="Iron-sulfur cluster assembly SufBD family protein Mb1496, 1st part" evidence="1">
    <location>
        <begin position="1"/>
        <end position="252"/>
    </location>
</feature>
<feature type="chain" id="PRO_0000036194" description="Endonuclease PI-MtuHIIP" evidence="1">
    <location>
        <begin position="253"/>
        <end position="611"/>
    </location>
</feature>
<feature type="chain" id="PRO_0000036195" description="Iron-sulfur cluster assembly SufBD family protein Mb1496, 2nd part" evidence="1">
    <location>
        <begin position="612"/>
        <end position="846"/>
    </location>
</feature>
<feature type="domain" description="DOD-type homing endonuclease" evidence="2">
    <location>
        <begin position="388"/>
        <end position="528"/>
    </location>
</feature>
<feature type="region of interest" description="Disordered" evidence="3">
    <location>
        <begin position="1"/>
        <end position="20"/>
    </location>
</feature>
<protein>
    <recommendedName>
        <fullName>Iron-sulfur cluster assembly SufBD family protein Mb1496</fullName>
    </recommendedName>
    <component>
        <recommendedName>
            <fullName>Endonuclease PI-MtuHIIP</fullName>
            <ecNumber>3.1.-.-</ecNumber>
        </recommendedName>
        <alternativeName>
            <fullName>Mtu pps1 intein</fullName>
        </alternativeName>
    </component>
</protein>
<accession>P67126</accession>
<accession>A0A1R3XYD5</accession>
<accession>O53152</accession>
<accession>X2BI10</accession>
<reference key="1">
    <citation type="journal article" date="2003" name="Proc. Natl. Acad. Sci. U.S.A.">
        <title>The complete genome sequence of Mycobacterium bovis.</title>
        <authorList>
            <person name="Garnier T."/>
            <person name="Eiglmeier K."/>
            <person name="Camus J.-C."/>
            <person name="Medina N."/>
            <person name="Mansoor H."/>
            <person name="Pryor M."/>
            <person name="Duthoy S."/>
            <person name="Grondin S."/>
            <person name="Lacroix C."/>
            <person name="Monsempe C."/>
            <person name="Simon S."/>
            <person name="Harris B."/>
            <person name="Atkin R."/>
            <person name="Doggett J."/>
            <person name="Mayes R."/>
            <person name="Keating L."/>
            <person name="Wheeler P.R."/>
            <person name="Parkhill J."/>
            <person name="Barrell B.G."/>
            <person name="Cole S.T."/>
            <person name="Gordon S.V."/>
            <person name="Hewinson R.G."/>
        </authorList>
    </citation>
    <scope>NUCLEOTIDE SEQUENCE [LARGE SCALE GENOMIC DNA]</scope>
    <source>
        <strain>ATCC BAA-935 / AF2122/97</strain>
    </source>
</reference>
<reference key="2">
    <citation type="journal article" date="2017" name="Genome Announc.">
        <title>Updated reference genome sequence and annotation of Mycobacterium bovis AF2122/97.</title>
        <authorList>
            <person name="Malone K.M."/>
            <person name="Farrell D."/>
            <person name="Stuber T.P."/>
            <person name="Schubert O.T."/>
            <person name="Aebersold R."/>
            <person name="Robbe-Austerman S."/>
            <person name="Gordon S.V."/>
        </authorList>
    </citation>
    <scope>NUCLEOTIDE SEQUENCE [LARGE SCALE GENOMIC DNA]</scope>
    <scope>GENOME REANNOTATION</scope>
    <source>
        <strain>ATCC BAA-935 / AF2122/97</strain>
    </source>
</reference>
<dbReference type="EC" id="3.1.-.-"/>
<dbReference type="EMBL" id="LT708304">
    <property type="protein sequence ID" value="SIU00099.1"/>
    <property type="molecule type" value="Genomic_DNA"/>
</dbReference>
<dbReference type="RefSeq" id="NP_855148.1">
    <property type="nucleotide sequence ID" value="NC_002945.3"/>
</dbReference>
<dbReference type="SMR" id="P67126"/>
<dbReference type="KEGG" id="mbo:BQ2027_MB1496"/>
<dbReference type="PATRIC" id="fig|233413.5.peg.1637"/>
<dbReference type="Proteomes" id="UP000001419">
    <property type="component" value="Chromosome"/>
</dbReference>
<dbReference type="GO" id="GO:0004519">
    <property type="term" value="F:endonuclease activity"/>
    <property type="evidence" value="ECO:0007669"/>
    <property type="project" value="UniProtKB-KW"/>
</dbReference>
<dbReference type="GO" id="GO:0016539">
    <property type="term" value="P:intein-mediated protein splicing"/>
    <property type="evidence" value="ECO:0007669"/>
    <property type="project" value="InterPro"/>
</dbReference>
<dbReference type="GO" id="GO:0006314">
    <property type="term" value="P:intron homing"/>
    <property type="evidence" value="ECO:0007669"/>
    <property type="project" value="UniProtKB-KW"/>
</dbReference>
<dbReference type="GO" id="GO:0016226">
    <property type="term" value="P:iron-sulfur cluster assembly"/>
    <property type="evidence" value="ECO:0007669"/>
    <property type="project" value="InterPro"/>
</dbReference>
<dbReference type="CDD" id="cd00081">
    <property type="entry name" value="Hint"/>
    <property type="match status" value="1"/>
</dbReference>
<dbReference type="FunFam" id="3.10.28.10:FF:000006">
    <property type="entry name" value="FeS assembly protein SufB"/>
    <property type="match status" value="1"/>
</dbReference>
<dbReference type="FunFam" id="2.170.16.10:FF:000006">
    <property type="entry name" value="UPF0051 protein Mb1496"/>
    <property type="match status" value="1"/>
</dbReference>
<dbReference type="Gene3D" id="2.170.16.10">
    <property type="entry name" value="Hedgehog/Intein (Hint) domain"/>
    <property type="match status" value="1"/>
</dbReference>
<dbReference type="Gene3D" id="3.10.28.10">
    <property type="entry name" value="Homing endonucleases"/>
    <property type="match status" value="1"/>
</dbReference>
<dbReference type="InterPro" id="IPR055346">
    <property type="entry name" value="Fe-S_cluster_assembly_SufBD"/>
</dbReference>
<dbReference type="InterPro" id="IPR003586">
    <property type="entry name" value="Hint_dom_C"/>
</dbReference>
<dbReference type="InterPro" id="IPR003587">
    <property type="entry name" value="Hint_dom_N"/>
</dbReference>
<dbReference type="InterPro" id="IPR036844">
    <property type="entry name" value="Hint_dom_sf"/>
</dbReference>
<dbReference type="InterPro" id="IPR027434">
    <property type="entry name" value="Homing_endonucl"/>
</dbReference>
<dbReference type="InterPro" id="IPR006142">
    <property type="entry name" value="INTEIN"/>
</dbReference>
<dbReference type="InterPro" id="IPR030934">
    <property type="entry name" value="Intein_C"/>
</dbReference>
<dbReference type="InterPro" id="IPR004042">
    <property type="entry name" value="Intein_endonuc_central"/>
</dbReference>
<dbReference type="InterPro" id="IPR006141">
    <property type="entry name" value="Intein_N"/>
</dbReference>
<dbReference type="InterPro" id="IPR010231">
    <property type="entry name" value="SUF_FeS_clus_asmbl_SufB"/>
</dbReference>
<dbReference type="InterPro" id="IPR000825">
    <property type="entry name" value="SUF_FeS_clus_asmbl_SufBD_core"/>
</dbReference>
<dbReference type="InterPro" id="IPR037284">
    <property type="entry name" value="SUF_FeS_clus_asmbl_SufBD_sf"/>
</dbReference>
<dbReference type="InterPro" id="IPR045595">
    <property type="entry name" value="SufBD_N"/>
</dbReference>
<dbReference type="NCBIfam" id="TIGR01443">
    <property type="entry name" value="intein_Cterm"/>
    <property type="match status" value="1"/>
</dbReference>
<dbReference type="NCBIfam" id="TIGR01980">
    <property type="entry name" value="sufB"/>
    <property type="match status" value="1"/>
</dbReference>
<dbReference type="PANTHER" id="PTHR30508">
    <property type="entry name" value="FES CLUSTER ASSEMBLY PROTEIN SUF"/>
    <property type="match status" value="1"/>
</dbReference>
<dbReference type="PANTHER" id="PTHR30508:SF1">
    <property type="entry name" value="UPF0051 PROTEIN ABCI8, CHLOROPLASTIC-RELATED"/>
    <property type="match status" value="1"/>
</dbReference>
<dbReference type="Pfam" id="PF01458">
    <property type="entry name" value="SUFBD_core"/>
    <property type="match status" value="1"/>
</dbReference>
<dbReference type="Pfam" id="PF19295">
    <property type="entry name" value="SufBD_N"/>
    <property type="match status" value="1"/>
</dbReference>
<dbReference type="PRINTS" id="PR00379">
    <property type="entry name" value="INTEIN"/>
</dbReference>
<dbReference type="SMART" id="SM00305">
    <property type="entry name" value="HintC"/>
    <property type="match status" value="1"/>
</dbReference>
<dbReference type="SMART" id="SM00306">
    <property type="entry name" value="HintN"/>
    <property type="match status" value="1"/>
</dbReference>
<dbReference type="SUPFAM" id="SSF51294">
    <property type="entry name" value="Hedgehog/intein (Hint) domain"/>
    <property type="match status" value="1"/>
</dbReference>
<dbReference type="SUPFAM" id="SSF101960">
    <property type="entry name" value="Stabilizer of iron transporter SufD"/>
    <property type="match status" value="2"/>
</dbReference>
<dbReference type="PROSITE" id="PS50818">
    <property type="entry name" value="INTEIN_C_TER"/>
    <property type="match status" value="1"/>
</dbReference>
<dbReference type="PROSITE" id="PS50819">
    <property type="entry name" value="INTEIN_ENDONUCLEASE"/>
    <property type="match status" value="1"/>
</dbReference>
<dbReference type="PROSITE" id="PS50817">
    <property type="entry name" value="INTEIN_N_TER"/>
    <property type="match status" value="1"/>
</dbReference>
<sequence length="846" mass="94171">MTLTPEASKSVAQPPTQAPLTQEEAIASLGRYGYGWADSDVAGANAQRGLSEAVVRDISAKKNEPDWMLQSRLKALRIFDRKPIPKWGSNLDGIDFDNIKYFVRSTEKQAASWDDLPEDIRNTYDRLGIPEAEKQRLVAGVAAQYESEVVYHQIREDLEAQGVIFLDTDTGLREHPDIFKEYFGTVIPAGDNKFSALNTAVWSGGSFIYVPPGVHVDIPLQAYFRINTENMGQFERTLIIADEGSYVHYVEGCLPAGELITTADGDLRPIESIRVGDFVTGHDGRPHRVTAVQVRDLDGELFTFTPMSPANAFSVTAEHPLLAIPRDEVRVMRKERNGWKAEVNSTKLRSAEPRWIAAKDVAEGDFLIYPKPKPIPHRTVLPLEFARLAGYYLAEGHACLTNGCESLIFSFHSDEFEYVEDVRQACKSLYEKSGSVLIEEHKHSARVTVYTKAGYAAMRDNVGIGSSNKKLSDLLMRQDETFLRELVDAYVNGDGNVTRRNGAVWKRVHTTSRLWAFQLQSILARLGHYATVELRRPGGPGVIMGRNVVRKDIYQVQWTEGGRGPKQARDCGDYFAVPIKKRAVREAHEPVYNLDVENPDSYLAYGFAVHNCTAPIYKSDSLHSAVVEIIVKPHARVRYTTIQNWSNNVYNLVTKRARAEAGATMEWIDGNIGSKVTMKYPAVWMTGEHAKGEVLSVAFAGEDQHQDTGAKMLHLAPNTSSNIVSKSVARGGGRTSYRGLVQVNKGAHGSRSSVKCDALLVDTVSRSDTYPYVDIREDDVTMGHEATVSKVSENQLFYLMSRGLTEDEAMAMVVRGFVEPIAKELPMEYALELNRLIELQMEGAVG</sequence>
<proteinExistence type="inferred from homology"/>
<name>Y1496_MYCBO</name>
<organism>
    <name type="scientific">Mycobacterium bovis (strain ATCC BAA-935 / AF2122/97)</name>
    <dbReference type="NCBI Taxonomy" id="233413"/>
    <lineage>
        <taxon>Bacteria</taxon>
        <taxon>Bacillati</taxon>
        <taxon>Actinomycetota</taxon>
        <taxon>Actinomycetes</taxon>
        <taxon>Mycobacteriales</taxon>
        <taxon>Mycobacteriaceae</taxon>
        <taxon>Mycobacterium</taxon>
        <taxon>Mycobacterium tuberculosis complex</taxon>
    </lineage>
</organism>